<dbReference type="EC" id="7.1.2.2" evidence="1"/>
<dbReference type="EMBL" id="CP001102">
    <property type="protein sequence ID" value="ACE05517.1"/>
    <property type="molecule type" value="Genomic_DNA"/>
</dbReference>
<dbReference type="RefSeq" id="WP_012472289.1">
    <property type="nucleotide sequence ID" value="NC_010830.1"/>
</dbReference>
<dbReference type="SMR" id="B3EU98"/>
<dbReference type="STRING" id="452471.Aasi_0065"/>
<dbReference type="KEGG" id="aas:Aasi_0065"/>
<dbReference type="eggNOG" id="COG0056">
    <property type="taxonomic scope" value="Bacteria"/>
</dbReference>
<dbReference type="HOGENOM" id="CLU_010091_2_1_10"/>
<dbReference type="OrthoDB" id="9803053at2"/>
<dbReference type="Proteomes" id="UP000001227">
    <property type="component" value="Chromosome"/>
</dbReference>
<dbReference type="GO" id="GO:0005886">
    <property type="term" value="C:plasma membrane"/>
    <property type="evidence" value="ECO:0007669"/>
    <property type="project" value="UniProtKB-SubCell"/>
</dbReference>
<dbReference type="GO" id="GO:0045259">
    <property type="term" value="C:proton-transporting ATP synthase complex"/>
    <property type="evidence" value="ECO:0007669"/>
    <property type="project" value="UniProtKB-KW"/>
</dbReference>
<dbReference type="GO" id="GO:0043531">
    <property type="term" value="F:ADP binding"/>
    <property type="evidence" value="ECO:0007669"/>
    <property type="project" value="TreeGrafter"/>
</dbReference>
<dbReference type="GO" id="GO:0005524">
    <property type="term" value="F:ATP binding"/>
    <property type="evidence" value="ECO:0007669"/>
    <property type="project" value="UniProtKB-UniRule"/>
</dbReference>
<dbReference type="GO" id="GO:0046933">
    <property type="term" value="F:proton-transporting ATP synthase activity, rotational mechanism"/>
    <property type="evidence" value="ECO:0007669"/>
    <property type="project" value="UniProtKB-UniRule"/>
</dbReference>
<dbReference type="CDD" id="cd18113">
    <property type="entry name" value="ATP-synt_F1_alpha_C"/>
    <property type="match status" value="1"/>
</dbReference>
<dbReference type="CDD" id="cd18116">
    <property type="entry name" value="ATP-synt_F1_alpha_N"/>
    <property type="match status" value="1"/>
</dbReference>
<dbReference type="CDD" id="cd01132">
    <property type="entry name" value="F1-ATPase_alpha_CD"/>
    <property type="match status" value="1"/>
</dbReference>
<dbReference type="FunFam" id="1.20.150.20:FF:000001">
    <property type="entry name" value="ATP synthase subunit alpha"/>
    <property type="match status" value="1"/>
</dbReference>
<dbReference type="FunFam" id="2.40.30.20:FF:000001">
    <property type="entry name" value="ATP synthase subunit alpha"/>
    <property type="match status" value="1"/>
</dbReference>
<dbReference type="FunFam" id="3.40.50.300:FF:000002">
    <property type="entry name" value="ATP synthase subunit alpha"/>
    <property type="match status" value="1"/>
</dbReference>
<dbReference type="Gene3D" id="2.40.30.20">
    <property type="match status" value="1"/>
</dbReference>
<dbReference type="Gene3D" id="1.20.150.20">
    <property type="entry name" value="ATP synthase alpha/beta chain, C-terminal domain"/>
    <property type="match status" value="1"/>
</dbReference>
<dbReference type="Gene3D" id="3.40.50.300">
    <property type="entry name" value="P-loop containing nucleotide triphosphate hydrolases"/>
    <property type="match status" value="1"/>
</dbReference>
<dbReference type="HAMAP" id="MF_01346">
    <property type="entry name" value="ATP_synth_alpha_bact"/>
    <property type="match status" value="1"/>
</dbReference>
<dbReference type="InterPro" id="IPR023366">
    <property type="entry name" value="ATP_synth_asu-like_sf"/>
</dbReference>
<dbReference type="InterPro" id="IPR000793">
    <property type="entry name" value="ATP_synth_asu_C"/>
</dbReference>
<dbReference type="InterPro" id="IPR038376">
    <property type="entry name" value="ATP_synth_asu_C_sf"/>
</dbReference>
<dbReference type="InterPro" id="IPR033732">
    <property type="entry name" value="ATP_synth_F1_a_nt-bd_dom"/>
</dbReference>
<dbReference type="InterPro" id="IPR005294">
    <property type="entry name" value="ATP_synth_F1_asu"/>
</dbReference>
<dbReference type="InterPro" id="IPR020003">
    <property type="entry name" value="ATPase_a/bsu_AS"/>
</dbReference>
<dbReference type="InterPro" id="IPR004100">
    <property type="entry name" value="ATPase_F1/V1/A1_a/bsu_N"/>
</dbReference>
<dbReference type="InterPro" id="IPR036121">
    <property type="entry name" value="ATPase_F1/V1/A1_a/bsu_N_sf"/>
</dbReference>
<dbReference type="InterPro" id="IPR000194">
    <property type="entry name" value="ATPase_F1/V1/A1_a/bsu_nucl-bd"/>
</dbReference>
<dbReference type="InterPro" id="IPR027417">
    <property type="entry name" value="P-loop_NTPase"/>
</dbReference>
<dbReference type="NCBIfam" id="TIGR00962">
    <property type="entry name" value="atpA"/>
    <property type="match status" value="1"/>
</dbReference>
<dbReference type="NCBIfam" id="NF009884">
    <property type="entry name" value="PRK13343.1"/>
    <property type="match status" value="1"/>
</dbReference>
<dbReference type="PANTHER" id="PTHR48082">
    <property type="entry name" value="ATP SYNTHASE SUBUNIT ALPHA, MITOCHONDRIAL"/>
    <property type="match status" value="1"/>
</dbReference>
<dbReference type="PANTHER" id="PTHR48082:SF2">
    <property type="entry name" value="ATP SYNTHASE SUBUNIT ALPHA, MITOCHONDRIAL"/>
    <property type="match status" value="1"/>
</dbReference>
<dbReference type="Pfam" id="PF00006">
    <property type="entry name" value="ATP-synt_ab"/>
    <property type="match status" value="1"/>
</dbReference>
<dbReference type="Pfam" id="PF00306">
    <property type="entry name" value="ATP-synt_ab_C"/>
    <property type="match status" value="1"/>
</dbReference>
<dbReference type="Pfam" id="PF02874">
    <property type="entry name" value="ATP-synt_ab_N"/>
    <property type="match status" value="1"/>
</dbReference>
<dbReference type="PIRSF" id="PIRSF039088">
    <property type="entry name" value="F_ATPase_subunit_alpha"/>
    <property type="match status" value="1"/>
</dbReference>
<dbReference type="SUPFAM" id="SSF47917">
    <property type="entry name" value="C-terminal domain of alpha and beta subunits of F1 ATP synthase"/>
    <property type="match status" value="1"/>
</dbReference>
<dbReference type="SUPFAM" id="SSF50615">
    <property type="entry name" value="N-terminal domain of alpha and beta subunits of F1 ATP synthase"/>
    <property type="match status" value="1"/>
</dbReference>
<dbReference type="SUPFAM" id="SSF52540">
    <property type="entry name" value="P-loop containing nucleoside triphosphate hydrolases"/>
    <property type="match status" value="1"/>
</dbReference>
<dbReference type="PROSITE" id="PS00152">
    <property type="entry name" value="ATPASE_ALPHA_BETA"/>
    <property type="match status" value="1"/>
</dbReference>
<gene>
    <name evidence="1" type="primary">atpA</name>
    <name type="ordered locus">Aasi_0065</name>
</gene>
<name>ATPA_AMOA5</name>
<accession>B3EU98</accession>
<proteinExistence type="inferred from homology"/>
<organism>
    <name type="scientific">Amoebophilus asiaticus (strain 5a2)</name>
    <dbReference type="NCBI Taxonomy" id="452471"/>
    <lineage>
        <taxon>Bacteria</taxon>
        <taxon>Pseudomonadati</taxon>
        <taxon>Bacteroidota</taxon>
        <taxon>Cytophagia</taxon>
        <taxon>Cytophagales</taxon>
        <taxon>Amoebophilaceae</taxon>
        <taxon>Candidatus Amoebophilus</taxon>
    </lineage>
</organism>
<sequence>MVDLQPDEVAAVLKQQLAHLKTDTELEEVGTVLQVGDGVAHIYGLTKIQAGELVEFENGKKAIALNLEENSVGAVIFGDAEGIGEGSTAKRTKRIASIHVGEGMIGRVVNTLGEPIDGKGPIKGELYEMPLERKAPGVLYRQPVAEPLQTGIKAIDAMIPIGRGQRELIIGDRQTGKTTLAIDTILNQRTYFEQGNPVYCIYVAIGQKASTIASVMASLEKYGAMEYTTIVAAPAATAASLQYFAPFTGATIGEYFRDTGKPALVIYDDLSKQAVAYREVSLLLRRPPGREAYPGDVFYLHSRLLERAAKINANDDIAQQMNDLPPSLEGKVKGGGSLTALPIIETQNGDVSAYIPTNVISITDGQIFLESALFNAGIRPAINVGISVSRVGGAAQVKAMKKVAGTLKLDQAQFRELEAFSKFGSDLDVATQRTIDRGRKNQEILKQGLHHPLTLEEQVCILYASTNGYLDKISLSQVTEFEKSYLSLLKSQHKGVLAKIAAGEWSDGIAQVLAEEAKNLAQLYVNDTSINS</sequence>
<evidence type="ECO:0000255" key="1">
    <source>
        <dbReference type="HAMAP-Rule" id="MF_01346"/>
    </source>
</evidence>
<keyword id="KW-0066">ATP synthesis</keyword>
<keyword id="KW-0067">ATP-binding</keyword>
<keyword id="KW-1003">Cell membrane</keyword>
<keyword id="KW-0139">CF(1)</keyword>
<keyword id="KW-0375">Hydrogen ion transport</keyword>
<keyword id="KW-0406">Ion transport</keyword>
<keyword id="KW-0472">Membrane</keyword>
<keyword id="KW-0547">Nucleotide-binding</keyword>
<keyword id="KW-1185">Reference proteome</keyword>
<keyword id="KW-1278">Translocase</keyword>
<keyword id="KW-0813">Transport</keyword>
<protein>
    <recommendedName>
        <fullName evidence="1">ATP synthase subunit alpha</fullName>
        <ecNumber evidence="1">7.1.2.2</ecNumber>
    </recommendedName>
    <alternativeName>
        <fullName evidence="1">ATP synthase F1 sector subunit alpha</fullName>
    </alternativeName>
    <alternativeName>
        <fullName evidence="1">F-ATPase subunit alpha</fullName>
    </alternativeName>
</protein>
<feature type="chain" id="PRO_1000143338" description="ATP synthase subunit alpha">
    <location>
        <begin position="1"/>
        <end position="532"/>
    </location>
</feature>
<feature type="binding site" evidence="1">
    <location>
        <begin position="171"/>
        <end position="178"/>
    </location>
    <ligand>
        <name>ATP</name>
        <dbReference type="ChEBI" id="CHEBI:30616"/>
    </ligand>
</feature>
<feature type="site" description="Required for activity" evidence="1">
    <location>
        <position position="387"/>
    </location>
</feature>
<comment type="function">
    <text evidence="1">Produces ATP from ADP in the presence of a proton gradient across the membrane. The alpha chain is a regulatory subunit.</text>
</comment>
<comment type="catalytic activity">
    <reaction evidence="1">
        <text>ATP + H2O + 4 H(+)(in) = ADP + phosphate + 5 H(+)(out)</text>
        <dbReference type="Rhea" id="RHEA:57720"/>
        <dbReference type="ChEBI" id="CHEBI:15377"/>
        <dbReference type="ChEBI" id="CHEBI:15378"/>
        <dbReference type="ChEBI" id="CHEBI:30616"/>
        <dbReference type="ChEBI" id="CHEBI:43474"/>
        <dbReference type="ChEBI" id="CHEBI:456216"/>
        <dbReference type="EC" id="7.1.2.2"/>
    </reaction>
</comment>
<comment type="subunit">
    <text evidence="1">F-type ATPases have 2 components, CF(1) - the catalytic core - and CF(0) - the membrane proton channel. CF(1) has five subunits: alpha(3), beta(3), gamma(1), delta(1), epsilon(1). CF(0) has three main subunits: a(1), b(2) and c(9-12). The alpha and beta chains form an alternating ring which encloses part of the gamma chain. CF(1) is attached to CF(0) by a central stalk formed by the gamma and epsilon chains, while a peripheral stalk is formed by the delta and b chains.</text>
</comment>
<comment type="subcellular location">
    <subcellularLocation>
        <location evidence="1">Cell membrane</location>
        <topology evidence="1">Peripheral membrane protein</topology>
    </subcellularLocation>
</comment>
<comment type="similarity">
    <text evidence="1">Belongs to the ATPase alpha/beta chains family.</text>
</comment>
<reference key="1">
    <citation type="journal article" date="2010" name="J. Bacteriol.">
        <title>The genome of the amoeba symbiont 'Candidatus Amoebophilus asiaticus' reveals common mechanisms for host cell interaction among amoeba-associated bacteria.</title>
        <authorList>
            <person name="Schmitz-Esser S."/>
            <person name="Tischler P."/>
            <person name="Arnold R."/>
            <person name="Montanaro J."/>
            <person name="Wagner M."/>
            <person name="Rattei T."/>
            <person name="Horn M."/>
        </authorList>
    </citation>
    <scope>NUCLEOTIDE SEQUENCE [LARGE SCALE GENOMIC DNA]</scope>
    <source>
        <strain>5a2</strain>
    </source>
</reference>